<evidence type="ECO:0000255" key="1">
    <source>
        <dbReference type="HAMAP-Rule" id="MF_00909"/>
    </source>
</evidence>
<evidence type="ECO:0000256" key="2">
    <source>
        <dbReference type="SAM" id="MobiDB-lite"/>
    </source>
</evidence>
<evidence type="ECO:0000305" key="3"/>
<sequence length="457" mass="50261">MEDELLNFNYTDSGLPVIIKVIGVGGGGGNAVKNMYHGKVRDVSFLLCNTDVQALDRSEVPDRLVLGREVTNGLGAGSRPEVARRAAEASEADIRKILDDGHTRMVFVTAGMGGGTGTGAAPVIGRIARELNILTVGIVTIPFVFEGKRKILQALEGVEEMRKNVDALLVVNNERLRIIYKDLKLDNAFAKADETLTNAANGIAEMIMKEGTINLDFADVHTTLKDGGIAIISTGYGEGPDRMEQAINEALTSPLLNNNDIFKARRVLFNIYQGTEDPLGTDELSAINELTAKIETGFDTIWGYTTDPELGKKVKITILASGFDLDTTRESIRIGDNLGNVINDPISSREIETQNERDNDLINRYYRPDELEKVKVVDFKPIILNLDELDNDELIMALEEKPAYSRTGVLLSRIDNIRMRIAESAGRLKKDVVRSEESERPAFESERSSSPTTISFN</sequence>
<accession>O08466</accession>
<comment type="function">
    <text evidence="1">Essential cell division protein that forms a contractile ring structure (Z ring) at the future cell division site. The regulation of the ring assembly controls the timing and the location of cell division. One of the functions of the FtsZ ring is to recruit other cell division proteins to the septum to produce a new cell wall between the dividing cells. Binds GTP and shows GTPase activity.</text>
</comment>
<comment type="subunit">
    <text evidence="1">Homodimer. Polymerizes to form a dynamic ring structure in a strictly GTP-dependent manner. Interacts directly with several other division proteins.</text>
</comment>
<comment type="subcellular location">
    <subcellularLocation>
        <location evidence="1">Cytoplasm</location>
    </subcellularLocation>
    <text evidence="1">Assembles at midcell at the inner surface of the cytoplasmic membrane.</text>
</comment>
<comment type="similarity">
    <text evidence="1">Belongs to the FtsZ family.</text>
</comment>
<name>FTSZ_PORGI</name>
<gene>
    <name evidence="1" type="primary">ftsZ</name>
    <name type="ordered locus">PG_0584</name>
</gene>
<organism>
    <name type="scientific">Porphyromonas gingivalis (strain ATCC BAA-308 / W83)</name>
    <dbReference type="NCBI Taxonomy" id="242619"/>
    <lineage>
        <taxon>Bacteria</taxon>
        <taxon>Pseudomonadati</taxon>
        <taxon>Bacteroidota</taxon>
        <taxon>Bacteroidia</taxon>
        <taxon>Bacteroidales</taxon>
        <taxon>Porphyromonadaceae</taxon>
        <taxon>Porphyromonas</taxon>
    </lineage>
</organism>
<keyword id="KW-0131">Cell cycle</keyword>
<keyword id="KW-0132">Cell division</keyword>
<keyword id="KW-0963">Cytoplasm</keyword>
<keyword id="KW-0342">GTP-binding</keyword>
<keyword id="KW-0547">Nucleotide-binding</keyword>
<keyword id="KW-1185">Reference proteome</keyword>
<keyword id="KW-0717">Septation</keyword>
<reference key="1">
    <citation type="submission" date="1998-05" db="EMBL/GenBank/DDBJ databases">
        <authorList>
            <person name="Akifusa S."/>
            <person name="Tamura H."/>
            <person name="Ansai T."/>
            <person name="Takehara T."/>
        </authorList>
    </citation>
    <scope>NUCLEOTIDE SEQUENCE [GENOMIC DNA]</scope>
    <source>
        <strain>381</strain>
    </source>
</reference>
<reference key="2">
    <citation type="journal article" date="2003" name="J. Bacteriol.">
        <title>Complete genome sequence of the oral pathogenic bacterium Porphyromonas gingivalis strain W83.</title>
        <authorList>
            <person name="Nelson K.E."/>
            <person name="Fleischmann R.D."/>
            <person name="DeBoy R.T."/>
            <person name="Paulsen I.T."/>
            <person name="Fouts D.E."/>
            <person name="Eisen J.A."/>
            <person name="Daugherty S.C."/>
            <person name="Dodson R.J."/>
            <person name="Durkin A.S."/>
            <person name="Gwinn M.L."/>
            <person name="Haft D.H."/>
            <person name="Kolonay J.F."/>
            <person name="Nelson W.C."/>
            <person name="Mason T.M."/>
            <person name="Tallon L."/>
            <person name="Gray J."/>
            <person name="Granger D."/>
            <person name="Tettelin H."/>
            <person name="Dong H."/>
            <person name="Galvin J.L."/>
            <person name="Duncan M.J."/>
            <person name="Dewhirst F.E."/>
            <person name="Fraser C.M."/>
        </authorList>
    </citation>
    <scope>NUCLEOTIDE SEQUENCE [LARGE SCALE GENOMIC DNA]</scope>
    <source>
        <strain>ATCC BAA-308 / W83</strain>
    </source>
</reference>
<proteinExistence type="inferred from homology"/>
<dbReference type="EMBL" id="AB004555">
    <property type="protein sequence ID" value="BAA28179.1"/>
    <property type="molecule type" value="Genomic_DNA"/>
</dbReference>
<dbReference type="EMBL" id="AE015924">
    <property type="protein sequence ID" value="AAQ65771.1"/>
    <property type="molecule type" value="Genomic_DNA"/>
</dbReference>
<dbReference type="RefSeq" id="WP_005873941.1">
    <property type="nucleotide sequence ID" value="NC_002950.2"/>
</dbReference>
<dbReference type="SMR" id="O08466"/>
<dbReference type="STRING" id="242619.PG_0584"/>
<dbReference type="EnsemblBacteria" id="AAQ65771">
    <property type="protein sequence ID" value="AAQ65771"/>
    <property type="gene ID" value="PG_0584"/>
</dbReference>
<dbReference type="KEGG" id="pgi:PG_0584"/>
<dbReference type="eggNOG" id="COG0206">
    <property type="taxonomic scope" value="Bacteria"/>
</dbReference>
<dbReference type="HOGENOM" id="CLU_024865_0_1_10"/>
<dbReference type="Proteomes" id="UP000000588">
    <property type="component" value="Chromosome"/>
</dbReference>
<dbReference type="GO" id="GO:0032153">
    <property type="term" value="C:cell division site"/>
    <property type="evidence" value="ECO:0007669"/>
    <property type="project" value="UniProtKB-UniRule"/>
</dbReference>
<dbReference type="GO" id="GO:0005737">
    <property type="term" value="C:cytoplasm"/>
    <property type="evidence" value="ECO:0007669"/>
    <property type="project" value="UniProtKB-SubCell"/>
</dbReference>
<dbReference type="GO" id="GO:0005525">
    <property type="term" value="F:GTP binding"/>
    <property type="evidence" value="ECO:0007669"/>
    <property type="project" value="UniProtKB-UniRule"/>
</dbReference>
<dbReference type="GO" id="GO:0003924">
    <property type="term" value="F:GTPase activity"/>
    <property type="evidence" value="ECO:0007669"/>
    <property type="project" value="UniProtKB-UniRule"/>
</dbReference>
<dbReference type="GO" id="GO:0000917">
    <property type="term" value="P:division septum assembly"/>
    <property type="evidence" value="ECO:0007669"/>
    <property type="project" value="UniProtKB-KW"/>
</dbReference>
<dbReference type="GO" id="GO:0043093">
    <property type="term" value="P:FtsZ-dependent cytokinesis"/>
    <property type="evidence" value="ECO:0007669"/>
    <property type="project" value="UniProtKB-UniRule"/>
</dbReference>
<dbReference type="GO" id="GO:0051258">
    <property type="term" value="P:protein polymerization"/>
    <property type="evidence" value="ECO:0007669"/>
    <property type="project" value="UniProtKB-UniRule"/>
</dbReference>
<dbReference type="CDD" id="cd02201">
    <property type="entry name" value="FtsZ_type1"/>
    <property type="match status" value="1"/>
</dbReference>
<dbReference type="FunFam" id="3.40.50.1440:FF:000001">
    <property type="entry name" value="Cell division protein FtsZ"/>
    <property type="match status" value="1"/>
</dbReference>
<dbReference type="Gene3D" id="3.40.50.1440">
    <property type="entry name" value="Tubulin/FtsZ, GTPase domain"/>
    <property type="match status" value="1"/>
</dbReference>
<dbReference type="HAMAP" id="MF_00909">
    <property type="entry name" value="FtsZ"/>
    <property type="match status" value="1"/>
</dbReference>
<dbReference type="InterPro" id="IPR000158">
    <property type="entry name" value="Cell_div_FtsZ"/>
</dbReference>
<dbReference type="InterPro" id="IPR020805">
    <property type="entry name" value="Cell_div_FtsZ_CS"/>
</dbReference>
<dbReference type="InterPro" id="IPR045061">
    <property type="entry name" value="FtsZ/CetZ"/>
</dbReference>
<dbReference type="InterPro" id="IPR024757">
    <property type="entry name" value="FtsZ_C"/>
</dbReference>
<dbReference type="InterPro" id="IPR008280">
    <property type="entry name" value="Tub_FtsZ_C"/>
</dbReference>
<dbReference type="InterPro" id="IPR018316">
    <property type="entry name" value="Tubulin/FtsZ_2-layer-sand-dom"/>
</dbReference>
<dbReference type="InterPro" id="IPR036525">
    <property type="entry name" value="Tubulin/FtsZ_GTPase_sf"/>
</dbReference>
<dbReference type="InterPro" id="IPR003008">
    <property type="entry name" value="Tubulin_FtsZ_GTPase"/>
</dbReference>
<dbReference type="NCBIfam" id="TIGR00065">
    <property type="entry name" value="ftsZ"/>
    <property type="match status" value="1"/>
</dbReference>
<dbReference type="PANTHER" id="PTHR30314">
    <property type="entry name" value="CELL DIVISION PROTEIN FTSZ-RELATED"/>
    <property type="match status" value="1"/>
</dbReference>
<dbReference type="PANTHER" id="PTHR30314:SF3">
    <property type="entry name" value="MITOCHONDRIAL DIVISION PROTEIN FSZA"/>
    <property type="match status" value="1"/>
</dbReference>
<dbReference type="Pfam" id="PF12327">
    <property type="entry name" value="FtsZ_C"/>
    <property type="match status" value="1"/>
</dbReference>
<dbReference type="Pfam" id="PF00091">
    <property type="entry name" value="Tubulin"/>
    <property type="match status" value="1"/>
</dbReference>
<dbReference type="PRINTS" id="PR00423">
    <property type="entry name" value="CELLDVISFTSZ"/>
</dbReference>
<dbReference type="SMART" id="SM00864">
    <property type="entry name" value="Tubulin"/>
    <property type="match status" value="1"/>
</dbReference>
<dbReference type="SMART" id="SM00865">
    <property type="entry name" value="Tubulin_C"/>
    <property type="match status" value="1"/>
</dbReference>
<dbReference type="SUPFAM" id="SSF55307">
    <property type="entry name" value="Tubulin C-terminal domain-like"/>
    <property type="match status" value="1"/>
</dbReference>
<dbReference type="SUPFAM" id="SSF52490">
    <property type="entry name" value="Tubulin nucleotide-binding domain-like"/>
    <property type="match status" value="1"/>
</dbReference>
<dbReference type="PROSITE" id="PS01135">
    <property type="entry name" value="FTSZ_2"/>
    <property type="match status" value="1"/>
</dbReference>
<feature type="chain" id="PRO_0000114370" description="Cell division protein FtsZ">
    <location>
        <begin position="1"/>
        <end position="457"/>
    </location>
</feature>
<feature type="region of interest" description="Disordered" evidence="2">
    <location>
        <begin position="429"/>
        <end position="457"/>
    </location>
</feature>
<feature type="compositionally biased region" description="Basic and acidic residues" evidence="2">
    <location>
        <begin position="429"/>
        <end position="447"/>
    </location>
</feature>
<feature type="compositionally biased region" description="Polar residues" evidence="2">
    <location>
        <begin position="448"/>
        <end position="457"/>
    </location>
</feature>
<feature type="binding site" evidence="1">
    <location>
        <begin position="26"/>
        <end position="30"/>
    </location>
    <ligand>
        <name>GTP</name>
        <dbReference type="ChEBI" id="CHEBI:37565"/>
    </ligand>
</feature>
<feature type="binding site" evidence="1">
    <location>
        <begin position="115"/>
        <end position="117"/>
    </location>
    <ligand>
        <name>GTP</name>
        <dbReference type="ChEBI" id="CHEBI:37565"/>
    </ligand>
</feature>
<feature type="binding site" evidence="1">
    <location>
        <position position="146"/>
    </location>
    <ligand>
        <name>GTP</name>
        <dbReference type="ChEBI" id="CHEBI:37565"/>
    </ligand>
</feature>
<feature type="binding site" evidence="1">
    <location>
        <position position="150"/>
    </location>
    <ligand>
        <name>GTP</name>
        <dbReference type="ChEBI" id="CHEBI:37565"/>
    </ligand>
</feature>
<feature type="binding site" evidence="1">
    <location>
        <position position="193"/>
    </location>
    <ligand>
        <name>GTP</name>
        <dbReference type="ChEBI" id="CHEBI:37565"/>
    </ligand>
</feature>
<feature type="sequence conflict" description="In Ref. 1; BAA28179." evidence="3" ref="1">
    <original>V</original>
    <variation>L</variation>
    <location>
        <position position="52"/>
    </location>
</feature>
<feature type="sequence conflict" description="In Ref. 1; BAA28179." evidence="3" ref="1">
    <original>S</original>
    <variation>P</variation>
    <location>
        <position position="448"/>
    </location>
</feature>
<protein>
    <recommendedName>
        <fullName evidence="1">Cell division protein FtsZ</fullName>
    </recommendedName>
</protein>